<keyword id="KW-0687">Ribonucleoprotein</keyword>
<keyword id="KW-0689">Ribosomal protein</keyword>
<keyword id="KW-0694">RNA-binding</keyword>
<keyword id="KW-0699">rRNA-binding</keyword>
<feature type="chain" id="PRO_1000003574" description="Small ribosomal subunit protein bS18">
    <location>
        <begin position="1"/>
        <end position="76"/>
    </location>
</feature>
<reference key="1">
    <citation type="journal article" date="2005" name="Proc. Natl. Acad. Sci. U.S.A.">
        <title>Comparison of the complete genome sequences of Pseudomonas syringae pv. syringae B728a and pv. tomato DC3000.</title>
        <authorList>
            <person name="Feil H."/>
            <person name="Feil W.S."/>
            <person name="Chain P."/>
            <person name="Larimer F."/>
            <person name="Dibartolo G."/>
            <person name="Copeland A."/>
            <person name="Lykidis A."/>
            <person name="Trong S."/>
            <person name="Nolan M."/>
            <person name="Goltsman E."/>
            <person name="Thiel J."/>
            <person name="Malfatti S."/>
            <person name="Loper J.E."/>
            <person name="Lapidus A."/>
            <person name="Detter J.C."/>
            <person name="Land M."/>
            <person name="Richardson P.M."/>
            <person name="Kyrpides N.C."/>
            <person name="Ivanova N."/>
            <person name="Lindow S.E."/>
        </authorList>
    </citation>
    <scope>NUCLEOTIDE SEQUENCE [LARGE SCALE GENOMIC DNA]</scope>
    <source>
        <strain>B728a</strain>
    </source>
</reference>
<name>RS18_PSEU2</name>
<organism>
    <name type="scientific">Pseudomonas syringae pv. syringae (strain B728a)</name>
    <dbReference type="NCBI Taxonomy" id="205918"/>
    <lineage>
        <taxon>Bacteria</taxon>
        <taxon>Pseudomonadati</taxon>
        <taxon>Pseudomonadota</taxon>
        <taxon>Gammaproteobacteria</taxon>
        <taxon>Pseudomonadales</taxon>
        <taxon>Pseudomonadaceae</taxon>
        <taxon>Pseudomonas</taxon>
        <taxon>Pseudomonas syringae</taxon>
    </lineage>
</organism>
<sequence>MARFFRRRKFCRFTAEDVKEIDYKDLNTLKAYVSETGKIVPSRITGTKARYQRQLATAIKRARFLALLAYTDSHGR</sequence>
<gene>
    <name evidence="1" type="primary">rpsR</name>
    <name type="ordered locus">Psyr_0582</name>
</gene>
<evidence type="ECO:0000255" key="1">
    <source>
        <dbReference type="HAMAP-Rule" id="MF_00270"/>
    </source>
</evidence>
<evidence type="ECO:0000305" key="2"/>
<protein>
    <recommendedName>
        <fullName evidence="1">Small ribosomal subunit protein bS18</fullName>
    </recommendedName>
    <alternativeName>
        <fullName evidence="2">30S ribosomal protein S18</fullName>
    </alternativeName>
</protein>
<dbReference type="EMBL" id="CP000075">
    <property type="protein sequence ID" value="AAY35652.1"/>
    <property type="molecule type" value="Genomic_DNA"/>
</dbReference>
<dbReference type="RefSeq" id="WP_002551829.1">
    <property type="nucleotide sequence ID" value="NC_007005.1"/>
</dbReference>
<dbReference type="RefSeq" id="YP_233690.1">
    <property type="nucleotide sequence ID" value="NC_007005.1"/>
</dbReference>
<dbReference type="SMR" id="Q4ZYX0"/>
<dbReference type="STRING" id="205918.Psyr_0582"/>
<dbReference type="GeneID" id="98109115"/>
<dbReference type="KEGG" id="psb:Psyr_0582"/>
<dbReference type="PATRIC" id="fig|205918.7.peg.605"/>
<dbReference type="eggNOG" id="COG0238">
    <property type="taxonomic scope" value="Bacteria"/>
</dbReference>
<dbReference type="HOGENOM" id="CLU_148710_2_3_6"/>
<dbReference type="OrthoDB" id="9812008at2"/>
<dbReference type="PRO" id="PR:Q4ZYX0"/>
<dbReference type="Proteomes" id="UP000000426">
    <property type="component" value="Chromosome"/>
</dbReference>
<dbReference type="GO" id="GO:0022627">
    <property type="term" value="C:cytosolic small ribosomal subunit"/>
    <property type="evidence" value="ECO:0007669"/>
    <property type="project" value="TreeGrafter"/>
</dbReference>
<dbReference type="GO" id="GO:0070181">
    <property type="term" value="F:small ribosomal subunit rRNA binding"/>
    <property type="evidence" value="ECO:0007669"/>
    <property type="project" value="TreeGrafter"/>
</dbReference>
<dbReference type="GO" id="GO:0003735">
    <property type="term" value="F:structural constituent of ribosome"/>
    <property type="evidence" value="ECO:0007669"/>
    <property type="project" value="InterPro"/>
</dbReference>
<dbReference type="GO" id="GO:0006412">
    <property type="term" value="P:translation"/>
    <property type="evidence" value="ECO:0007669"/>
    <property type="project" value="UniProtKB-UniRule"/>
</dbReference>
<dbReference type="FunFam" id="4.10.640.10:FF:000001">
    <property type="entry name" value="30S ribosomal protein S18"/>
    <property type="match status" value="1"/>
</dbReference>
<dbReference type="Gene3D" id="4.10.640.10">
    <property type="entry name" value="Ribosomal protein S18"/>
    <property type="match status" value="1"/>
</dbReference>
<dbReference type="HAMAP" id="MF_00270">
    <property type="entry name" value="Ribosomal_bS18"/>
    <property type="match status" value="1"/>
</dbReference>
<dbReference type="InterPro" id="IPR001648">
    <property type="entry name" value="Ribosomal_bS18"/>
</dbReference>
<dbReference type="InterPro" id="IPR018275">
    <property type="entry name" value="Ribosomal_bS18_CS"/>
</dbReference>
<dbReference type="InterPro" id="IPR036870">
    <property type="entry name" value="Ribosomal_bS18_sf"/>
</dbReference>
<dbReference type="NCBIfam" id="TIGR00165">
    <property type="entry name" value="S18"/>
    <property type="match status" value="1"/>
</dbReference>
<dbReference type="PANTHER" id="PTHR13479">
    <property type="entry name" value="30S RIBOSOMAL PROTEIN S18"/>
    <property type="match status" value="1"/>
</dbReference>
<dbReference type="PANTHER" id="PTHR13479:SF40">
    <property type="entry name" value="SMALL RIBOSOMAL SUBUNIT PROTEIN BS18M"/>
    <property type="match status" value="1"/>
</dbReference>
<dbReference type="Pfam" id="PF01084">
    <property type="entry name" value="Ribosomal_S18"/>
    <property type="match status" value="1"/>
</dbReference>
<dbReference type="PRINTS" id="PR00974">
    <property type="entry name" value="RIBOSOMALS18"/>
</dbReference>
<dbReference type="SUPFAM" id="SSF46911">
    <property type="entry name" value="Ribosomal protein S18"/>
    <property type="match status" value="1"/>
</dbReference>
<dbReference type="PROSITE" id="PS00057">
    <property type="entry name" value="RIBOSOMAL_S18"/>
    <property type="match status" value="1"/>
</dbReference>
<accession>Q4ZYX0</accession>
<comment type="function">
    <text evidence="1">Binds as a heterodimer with protein bS6 to the central domain of the 16S rRNA, where it helps stabilize the platform of the 30S subunit.</text>
</comment>
<comment type="subunit">
    <text evidence="1">Part of the 30S ribosomal subunit. Forms a tight heterodimer with protein bS6.</text>
</comment>
<comment type="similarity">
    <text evidence="1">Belongs to the bacterial ribosomal protein bS18 family.</text>
</comment>
<proteinExistence type="inferred from homology"/>